<keyword id="KW-0963">Cytoplasm</keyword>
<keyword id="KW-0324">Glycolysis</keyword>
<keyword id="KW-0456">Lyase</keyword>
<keyword id="KW-0460">Magnesium</keyword>
<keyword id="KW-0479">Metal-binding</keyword>
<keyword id="KW-0964">Secreted</keyword>
<reference key="1">
    <citation type="submission" date="2006-12" db="EMBL/GenBank/DDBJ databases">
        <title>Complete sequence of Shewanella sp. W3-18-1.</title>
        <authorList>
            <consortium name="US DOE Joint Genome Institute"/>
            <person name="Copeland A."/>
            <person name="Lucas S."/>
            <person name="Lapidus A."/>
            <person name="Barry K."/>
            <person name="Detter J.C."/>
            <person name="Glavina del Rio T."/>
            <person name="Hammon N."/>
            <person name="Israni S."/>
            <person name="Dalin E."/>
            <person name="Tice H."/>
            <person name="Pitluck S."/>
            <person name="Chain P."/>
            <person name="Malfatti S."/>
            <person name="Shin M."/>
            <person name="Vergez L."/>
            <person name="Schmutz J."/>
            <person name="Larimer F."/>
            <person name="Land M."/>
            <person name="Hauser L."/>
            <person name="Kyrpides N."/>
            <person name="Lykidis A."/>
            <person name="Tiedje J."/>
            <person name="Richardson P."/>
        </authorList>
    </citation>
    <scope>NUCLEOTIDE SEQUENCE [LARGE SCALE GENOMIC DNA]</scope>
    <source>
        <strain>W3-18-1</strain>
    </source>
</reference>
<dbReference type="EC" id="4.2.1.11" evidence="1"/>
<dbReference type="EMBL" id="CP000503">
    <property type="protein sequence ID" value="ABM24098.1"/>
    <property type="molecule type" value="Genomic_DNA"/>
</dbReference>
<dbReference type="RefSeq" id="WP_011788605.1">
    <property type="nucleotide sequence ID" value="NC_008750.1"/>
</dbReference>
<dbReference type="SMR" id="A1RHF3"/>
<dbReference type="GeneID" id="67444366"/>
<dbReference type="KEGG" id="shw:Sputw3181_1255"/>
<dbReference type="HOGENOM" id="CLU_031223_2_1_6"/>
<dbReference type="UniPathway" id="UPA00109">
    <property type="reaction ID" value="UER00187"/>
</dbReference>
<dbReference type="Proteomes" id="UP000002597">
    <property type="component" value="Chromosome"/>
</dbReference>
<dbReference type="GO" id="GO:0009986">
    <property type="term" value="C:cell surface"/>
    <property type="evidence" value="ECO:0007669"/>
    <property type="project" value="UniProtKB-SubCell"/>
</dbReference>
<dbReference type="GO" id="GO:0005576">
    <property type="term" value="C:extracellular region"/>
    <property type="evidence" value="ECO:0007669"/>
    <property type="project" value="UniProtKB-SubCell"/>
</dbReference>
<dbReference type="GO" id="GO:0000015">
    <property type="term" value="C:phosphopyruvate hydratase complex"/>
    <property type="evidence" value="ECO:0007669"/>
    <property type="project" value="InterPro"/>
</dbReference>
<dbReference type="GO" id="GO:0000287">
    <property type="term" value="F:magnesium ion binding"/>
    <property type="evidence" value="ECO:0007669"/>
    <property type="project" value="UniProtKB-UniRule"/>
</dbReference>
<dbReference type="GO" id="GO:0004634">
    <property type="term" value="F:phosphopyruvate hydratase activity"/>
    <property type="evidence" value="ECO:0007669"/>
    <property type="project" value="UniProtKB-UniRule"/>
</dbReference>
<dbReference type="GO" id="GO:0006096">
    <property type="term" value="P:glycolytic process"/>
    <property type="evidence" value="ECO:0007669"/>
    <property type="project" value="UniProtKB-UniRule"/>
</dbReference>
<dbReference type="CDD" id="cd03313">
    <property type="entry name" value="enolase"/>
    <property type="match status" value="1"/>
</dbReference>
<dbReference type="FunFam" id="3.20.20.120:FF:000001">
    <property type="entry name" value="Enolase"/>
    <property type="match status" value="1"/>
</dbReference>
<dbReference type="FunFam" id="3.30.390.10:FF:000001">
    <property type="entry name" value="Enolase"/>
    <property type="match status" value="1"/>
</dbReference>
<dbReference type="Gene3D" id="3.20.20.120">
    <property type="entry name" value="Enolase-like C-terminal domain"/>
    <property type="match status" value="1"/>
</dbReference>
<dbReference type="Gene3D" id="3.30.390.10">
    <property type="entry name" value="Enolase-like, N-terminal domain"/>
    <property type="match status" value="1"/>
</dbReference>
<dbReference type="HAMAP" id="MF_00318">
    <property type="entry name" value="Enolase"/>
    <property type="match status" value="1"/>
</dbReference>
<dbReference type="InterPro" id="IPR000941">
    <property type="entry name" value="Enolase"/>
</dbReference>
<dbReference type="InterPro" id="IPR036849">
    <property type="entry name" value="Enolase-like_C_sf"/>
</dbReference>
<dbReference type="InterPro" id="IPR029017">
    <property type="entry name" value="Enolase-like_N"/>
</dbReference>
<dbReference type="InterPro" id="IPR020810">
    <property type="entry name" value="Enolase_C"/>
</dbReference>
<dbReference type="InterPro" id="IPR020809">
    <property type="entry name" value="Enolase_CS"/>
</dbReference>
<dbReference type="InterPro" id="IPR020811">
    <property type="entry name" value="Enolase_N"/>
</dbReference>
<dbReference type="NCBIfam" id="TIGR01060">
    <property type="entry name" value="eno"/>
    <property type="match status" value="1"/>
</dbReference>
<dbReference type="PANTHER" id="PTHR11902">
    <property type="entry name" value="ENOLASE"/>
    <property type="match status" value="1"/>
</dbReference>
<dbReference type="PANTHER" id="PTHR11902:SF1">
    <property type="entry name" value="ENOLASE"/>
    <property type="match status" value="1"/>
</dbReference>
<dbReference type="Pfam" id="PF00113">
    <property type="entry name" value="Enolase_C"/>
    <property type="match status" value="1"/>
</dbReference>
<dbReference type="Pfam" id="PF03952">
    <property type="entry name" value="Enolase_N"/>
    <property type="match status" value="1"/>
</dbReference>
<dbReference type="PIRSF" id="PIRSF001400">
    <property type="entry name" value="Enolase"/>
    <property type="match status" value="1"/>
</dbReference>
<dbReference type="PRINTS" id="PR00148">
    <property type="entry name" value="ENOLASE"/>
</dbReference>
<dbReference type="SFLD" id="SFLDS00001">
    <property type="entry name" value="Enolase"/>
    <property type="match status" value="1"/>
</dbReference>
<dbReference type="SFLD" id="SFLDF00002">
    <property type="entry name" value="enolase"/>
    <property type="match status" value="1"/>
</dbReference>
<dbReference type="SMART" id="SM01192">
    <property type="entry name" value="Enolase_C"/>
    <property type="match status" value="1"/>
</dbReference>
<dbReference type="SMART" id="SM01193">
    <property type="entry name" value="Enolase_N"/>
    <property type="match status" value="1"/>
</dbReference>
<dbReference type="SUPFAM" id="SSF51604">
    <property type="entry name" value="Enolase C-terminal domain-like"/>
    <property type="match status" value="1"/>
</dbReference>
<dbReference type="SUPFAM" id="SSF54826">
    <property type="entry name" value="Enolase N-terminal domain-like"/>
    <property type="match status" value="1"/>
</dbReference>
<dbReference type="PROSITE" id="PS00164">
    <property type="entry name" value="ENOLASE"/>
    <property type="match status" value="1"/>
</dbReference>
<proteinExistence type="inferred from homology"/>
<comment type="function">
    <text evidence="1">Catalyzes the reversible conversion of 2-phosphoglycerate (2-PG) into phosphoenolpyruvate (PEP). It is essential for the degradation of carbohydrates via glycolysis.</text>
</comment>
<comment type="catalytic activity">
    <reaction evidence="1">
        <text>(2R)-2-phosphoglycerate = phosphoenolpyruvate + H2O</text>
        <dbReference type="Rhea" id="RHEA:10164"/>
        <dbReference type="ChEBI" id="CHEBI:15377"/>
        <dbReference type="ChEBI" id="CHEBI:58289"/>
        <dbReference type="ChEBI" id="CHEBI:58702"/>
        <dbReference type="EC" id="4.2.1.11"/>
    </reaction>
</comment>
<comment type="cofactor">
    <cofactor evidence="1">
        <name>Mg(2+)</name>
        <dbReference type="ChEBI" id="CHEBI:18420"/>
    </cofactor>
    <text evidence="1">Binds a second Mg(2+) ion via substrate during catalysis.</text>
</comment>
<comment type="pathway">
    <text evidence="1">Carbohydrate degradation; glycolysis; pyruvate from D-glyceraldehyde 3-phosphate: step 4/5.</text>
</comment>
<comment type="subunit">
    <text evidence="1">Component of the RNA degradosome, a multiprotein complex involved in RNA processing and mRNA degradation.</text>
</comment>
<comment type="subcellular location">
    <subcellularLocation>
        <location evidence="1">Cytoplasm</location>
    </subcellularLocation>
    <subcellularLocation>
        <location evidence="1">Secreted</location>
    </subcellularLocation>
    <subcellularLocation>
        <location evidence="1">Cell surface</location>
    </subcellularLocation>
    <text evidence="1">Fractions of enolase are present in both the cytoplasm and on the cell surface.</text>
</comment>
<comment type="similarity">
    <text evidence="1">Belongs to the enolase family.</text>
</comment>
<gene>
    <name evidence="1" type="primary">eno</name>
    <name type="ordered locus">Sputw3181_1255</name>
</gene>
<accession>A1RHF3</accession>
<organism>
    <name type="scientific">Shewanella sp. (strain W3-18-1)</name>
    <dbReference type="NCBI Taxonomy" id="351745"/>
    <lineage>
        <taxon>Bacteria</taxon>
        <taxon>Pseudomonadati</taxon>
        <taxon>Pseudomonadota</taxon>
        <taxon>Gammaproteobacteria</taxon>
        <taxon>Alteromonadales</taxon>
        <taxon>Shewanellaceae</taxon>
        <taxon>Shewanella</taxon>
    </lineage>
</organism>
<sequence>MAKIINVIGREIMDSRGNPTVEAEVHLEGGFVGMAAAPSGASTGSREALELRDGDKSRYLGKGVLTAVANVNGVIRTALLGKDATAQAELDQIMIDLDGTENKDKLGANAILAVSLAAAKAAAASKGIPLYAHIAELNGTPGQYSMPVPMMNILNGGEHADNNVDIQEFMVQPVGAKTFREALRMGAEIFHTLKKVLHDKGLSTSVGDEGGFAPNLASNADALAVIKEAVELAGYKLGTDVTLALDCAASEFYKDGKYDLAGEGKVFDSNGFSDFLKSLADQYPIVSIEDGLDESDWDGWAYQTQIMGDKIQLVGDDLFVTNTKILTRGIENGIANSILIKFNQIGSLTETLAAIRMAKEAGYTAVISHRSGETEDATIADLAVGTAAGQIKTGSLCRSDRVAKYNQLLRIEEQLGEKAPYRGLKEIKGQA</sequence>
<protein>
    <recommendedName>
        <fullName evidence="1">Enolase</fullName>
        <ecNumber evidence="1">4.2.1.11</ecNumber>
    </recommendedName>
    <alternativeName>
        <fullName evidence="1">2-phospho-D-glycerate hydro-lyase</fullName>
    </alternativeName>
    <alternativeName>
        <fullName evidence="1">2-phosphoglycerate dehydratase</fullName>
    </alternativeName>
</protein>
<feature type="chain" id="PRO_1000019249" description="Enolase">
    <location>
        <begin position="1"/>
        <end position="431"/>
    </location>
</feature>
<feature type="active site" description="Proton donor" evidence="1">
    <location>
        <position position="209"/>
    </location>
</feature>
<feature type="active site" description="Proton acceptor" evidence="1">
    <location>
        <position position="341"/>
    </location>
</feature>
<feature type="binding site" evidence="1">
    <location>
        <position position="167"/>
    </location>
    <ligand>
        <name>(2R)-2-phosphoglycerate</name>
        <dbReference type="ChEBI" id="CHEBI:58289"/>
    </ligand>
</feature>
<feature type="binding site" evidence="1">
    <location>
        <position position="246"/>
    </location>
    <ligand>
        <name>Mg(2+)</name>
        <dbReference type="ChEBI" id="CHEBI:18420"/>
    </ligand>
</feature>
<feature type="binding site" evidence="1">
    <location>
        <position position="289"/>
    </location>
    <ligand>
        <name>Mg(2+)</name>
        <dbReference type="ChEBI" id="CHEBI:18420"/>
    </ligand>
</feature>
<feature type="binding site" evidence="1">
    <location>
        <position position="316"/>
    </location>
    <ligand>
        <name>Mg(2+)</name>
        <dbReference type="ChEBI" id="CHEBI:18420"/>
    </ligand>
</feature>
<feature type="binding site" evidence="1">
    <location>
        <position position="341"/>
    </location>
    <ligand>
        <name>(2R)-2-phosphoglycerate</name>
        <dbReference type="ChEBI" id="CHEBI:58289"/>
    </ligand>
</feature>
<feature type="binding site" evidence="1">
    <location>
        <position position="370"/>
    </location>
    <ligand>
        <name>(2R)-2-phosphoglycerate</name>
        <dbReference type="ChEBI" id="CHEBI:58289"/>
    </ligand>
</feature>
<feature type="binding site" evidence="1">
    <location>
        <position position="371"/>
    </location>
    <ligand>
        <name>(2R)-2-phosphoglycerate</name>
        <dbReference type="ChEBI" id="CHEBI:58289"/>
    </ligand>
</feature>
<feature type="binding site" evidence="1">
    <location>
        <position position="392"/>
    </location>
    <ligand>
        <name>(2R)-2-phosphoglycerate</name>
        <dbReference type="ChEBI" id="CHEBI:58289"/>
    </ligand>
</feature>
<evidence type="ECO:0000255" key="1">
    <source>
        <dbReference type="HAMAP-Rule" id="MF_00318"/>
    </source>
</evidence>
<name>ENO_SHESW</name>